<keyword id="KW-0030">Aminoacyl-tRNA synthetase</keyword>
<keyword id="KW-0067">ATP-binding</keyword>
<keyword id="KW-0963">Cytoplasm</keyword>
<keyword id="KW-0436">Ligase</keyword>
<keyword id="KW-0547">Nucleotide-binding</keyword>
<keyword id="KW-0648">Protein biosynthesis</keyword>
<keyword id="KW-1185">Reference proteome</keyword>
<reference key="1">
    <citation type="journal article" date="2009" name="Appl. Environ. Microbiol.">
        <title>Genomic analysis of 'Elusimicrobium minutum,' the first cultivated representative of the phylum 'Elusimicrobia' (formerly termite group 1).</title>
        <authorList>
            <person name="Herlemann D.P.R."/>
            <person name="Geissinger O."/>
            <person name="Ikeda-Ohtsubo W."/>
            <person name="Kunin V."/>
            <person name="Sun H."/>
            <person name="Lapidus A."/>
            <person name="Hugenholtz P."/>
            <person name="Brune A."/>
        </authorList>
    </citation>
    <scope>NUCLEOTIDE SEQUENCE [LARGE SCALE GENOMIC DNA]</scope>
    <source>
        <strain>Pei191</strain>
    </source>
</reference>
<proteinExistence type="inferred from homology"/>
<sequence length="573" mass="64573">MKLTQYYLPTLKEAPKDADTISAKLMLRAGLIRKTASGIYEWLPLGLKVLKKVEQIVREEMDAAGAHEVWLPLIQPKELWEESGRWTYYGKELLRIKDRKGAEFCFAPTAEEVITDVVRRDVTSYKQLPVALYQFASKFRDEIRPRFGVMRAREFYMKDAYSFHATEESINEWYLKFFEAYKKVCTRCGFKFKAVEADTGAIGGNFSHEFMVLADTGENEIADCDCGYAANTEKAEIFKPKFPAAKEELKTIEKVNTPNATTIEDVAKMLGQTADRFIKLLVFTADGQPVVALMRGDHELNEHKLKALLKAQELEKANEETYAKVTGSFVGYAGPVGLKEKNPKIKLFADYHVAGIVNGIAGGNEKDVHIINVTPSRDFTPDVYADLKIASEGDLCGKCGKKFNFTRGIEVGHTFKLGTKYSQSMKAEFLDENQKSHPFLMGCYGIGISRIVAAAIEQSHDENGIIWPAPLAPFDIYLVSIDTDINPKVKEETDSIYNQLTQAGLNVLLDDRNERPGIKFKDADLIGLPHRIVISSRTVETGEYEYKQRTSKEAIRRKLADISEQIKEFQASK</sequence>
<name>SYP_ELUMP</name>
<dbReference type="EC" id="6.1.1.15" evidence="1"/>
<dbReference type="EMBL" id="CP001055">
    <property type="protein sequence ID" value="ACC98239.1"/>
    <property type="molecule type" value="Genomic_DNA"/>
</dbReference>
<dbReference type="RefSeq" id="WP_012414854.1">
    <property type="nucleotide sequence ID" value="NC_010644.1"/>
</dbReference>
<dbReference type="SMR" id="B2KCB2"/>
<dbReference type="STRING" id="445932.Emin_0684"/>
<dbReference type="KEGG" id="emi:Emin_0684"/>
<dbReference type="HOGENOM" id="CLU_016739_0_0_0"/>
<dbReference type="OrthoDB" id="9809052at2"/>
<dbReference type="Proteomes" id="UP000001029">
    <property type="component" value="Chromosome"/>
</dbReference>
<dbReference type="GO" id="GO:0005829">
    <property type="term" value="C:cytosol"/>
    <property type="evidence" value="ECO:0007669"/>
    <property type="project" value="TreeGrafter"/>
</dbReference>
<dbReference type="GO" id="GO:0002161">
    <property type="term" value="F:aminoacyl-tRNA deacylase activity"/>
    <property type="evidence" value="ECO:0007669"/>
    <property type="project" value="InterPro"/>
</dbReference>
<dbReference type="GO" id="GO:0005524">
    <property type="term" value="F:ATP binding"/>
    <property type="evidence" value="ECO:0007669"/>
    <property type="project" value="UniProtKB-UniRule"/>
</dbReference>
<dbReference type="GO" id="GO:0004827">
    <property type="term" value="F:proline-tRNA ligase activity"/>
    <property type="evidence" value="ECO:0007669"/>
    <property type="project" value="UniProtKB-UniRule"/>
</dbReference>
<dbReference type="GO" id="GO:0006433">
    <property type="term" value="P:prolyl-tRNA aminoacylation"/>
    <property type="evidence" value="ECO:0007669"/>
    <property type="project" value="UniProtKB-UniRule"/>
</dbReference>
<dbReference type="CDD" id="cd04334">
    <property type="entry name" value="ProRS-INS"/>
    <property type="match status" value="1"/>
</dbReference>
<dbReference type="CDD" id="cd00861">
    <property type="entry name" value="ProRS_anticodon_short"/>
    <property type="match status" value="1"/>
</dbReference>
<dbReference type="CDD" id="cd00779">
    <property type="entry name" value="ProRS_core_prok"/>
    <property type="match status" value="1"/>
</dbReference>
<dbReference type="FunFam" id="3.30.930.10:FF:000042">
    <property type="entry name" value="probable proline--tRNA ligase, mitochondrial"/>
    <property type="match status" value="1"/>
</dbReference>
<dbReference type="FunFam" id="3.30.930.10:FF:000065">
    <property type="entry name" value="Proline--tRNA ligase"/>
    <property type="match status" value="1"/>
</dbReference>
<dbReference type="Gene3D" id="3.40.50.800">
    <property type="entry name" value="Anticodon-binding domain"/>
    <property type="match status" value="1"/>
</dbReference>
<dbReference type="Gene3D" id="3.30.930.10">
    <property type="entry name" value="Bira Bifunctional Protein, Domain 2"/>
    <property type="match status" value="2"/>
</dbReference>
<dbReference type="HAMAP" id="MF_01569">
    <property type="entry name" value="Pro_tRNA_synth_type1"/>
    <property type="match status" value="1"/>
</dbReference>
<dbReference type="InterPro" id="IPR002314">
    <property type="entry name" value="aa-tRNA-synt_IIb"/>
</dbReference>
<dbReference type="InterPro" id="IPR006195">
    <property type="entry name" value="aa-tRNA-synth_II"/>
</dbReference>
<dbReference type="InterPro" id="IPR045864">
    <property type="entry name" value="aa-tRNA-synth_II/BPL/LPL"/>
</dbReference>
<dbReference type="InterPro" id="IPR004154">
    <property type="entry name" value="Anticodon-bd"/>
</dbReference>
<dbReference type="InterPro" id="IPR036621">
    <property type="entry name" value="Anticodon-bd_dom_sf"/>
</dbReference>
<dbReference type="InterPro" id="IPR002316">
    <property type="entry name" value="Pro-tRNA-ligase_IIa"/>
</dbReference>
<dbReference type="InterPro" id="IPR004500">
    <property type="entry name" value="Pro-tRNA-synth_IIa_bac-type"/>
</dbReference>
<dbReference type="InterPro" id="IPR023717">
    <property type="entry name" value="Pro-tRNA-Synthase_IIa_type1"/>
</dbReference>
<dbReference type="InterPro" id="IPR050062">
    <property type="entry name" value="Pro-tRNA_synthetase"/>
</dbReference>
<dbReference type="InterPro" id="IPR044140">
    <property type="entry name" value="ProRS_anticodon_short"/>
</dbReference>
<dbReference type="InterPro" id="IPR033730">
    <property type="entry name" value="ProRS_core_prok"/>
</dbReference>
<dbReference type="InterPro" id="IPR036754">
    <property type="entry name" value="YbaK/aa-tRNA-synt-asso_dom_sf"/>
</dbReference>
<dbReference type="InterPro" id="IPR007214">
    <property type="entry name" value="YbaK/aa-tRNA-synth-assoc-dom"/>
</dbReference>
<dbReference type="NCBIfam" id="NF006625">
    <property type="entry name" value="PRK09194.1"/>
    <property type="match status" value="1"/>
</dbReference>
<dbReference type="NCBIfam" id="TIGR00409">
    <property type="entry name" value="proS_fam_II"/>
    <property type="match status" value="1"/>
</dbReference>
<dbReference type="PANTHER" id="PTHR42753">
    <property type="entry name" value="MITOCHONDRIAL RIBOSOME PROTEIN L39/PROLYL-TRNA LIGASE FAMILY MEMBER"/>
    <property type="match status" value="1"/>
</dbReference>
<dbReference type="PANTHER" id="PTHR42753:SF2">
    <property type="entry name" value="PROLINE--TRNA LIGASE"/>
    <property type="match status" value="1"/>
</dbReference>
<dbReference type="Pfam" id="PF03129">
    <property type="entry name" value="HGTP_anticodon"/>
    <property type="match status" value="1"/>
</dbReference>
<dbReference type="Pfam" id="PF00587">
    <property type="entry name" value="tRNA-synt_2b"/>
    <property type="match status" value="1"/>
</dbReference>
<dbReference type="Pfam" id="PF04073">
    <property type="entry name" value="tRNA_edit"/>
    <property type="match status" value="1"/>
</dbReference>
<dbReference type="PRINTS" id="PR01046">
    <property type="entry name" value="TRNASYNTHPRO"/>
</dbReference>
<dbReference type="SUPFAM" id="SSF52954">
    <property type="entry name" value="Class II aaRS ABD-related"/>
    <property type="match status" value="1"/>
</dbReference>
<dbReference type="SUPFAM" id="SSF55681">
    <property type="entry name" value="Class II aaRS and biotin synthetases"/>
    <property type="match status" value="1"/>
</dbReference>
<dbReference type="SUPFAM" id="SSF55826">
    <property type="entry name" value="YbaK/ProRS associated domain"/>
    <property type="match status" value="1"/>
</dbReference>
<dbReference type="PROSITE" id="PS50862">
    <property type="entry name" value="AA_TRNA_LIGASE_II"/>
    <property type="match status" value="1"/>
</dbReference>
<accession>B2KCB2</accession>
<comment type="function">
    <text evidence="1">Catalyzes the attachment of proline to tRNA(Pro) in a two-step reaction: proline is first activated by ATP to form Pro-AMP and then transferred to the acceptor end of tRNA(Pro). As ProRS can inadvertently accommodate and process non-cognate amino acids such as alanine and cysteine, to avoid such errors it has two additional distinct editing activities against alanine. One activity is designated as 'pretransfer' editing and involves the tRNA(Pro)-independent hydrolysis of activated Ala-AMP. The other activity is designated 'posttransfer' editing and involves deacylation of mischarged Ala-tRNA(Pro). The misacylated Cys-tRNA(Pro) is not edited by ProRS.</text>
</comment>
<comment type="catalytic activity">
    <reaction evidence="1">
        <text>tRNA(Pro) + L-proline + ATP = L-prolyl-tRNA(Pro) + AMP + diphosphate</text>
        <dbReference type="Rhea" id="RHEA:14305"/>
        <dbReference type="Rhea" id="RHEA-COMP:9700"/>
        <dbReference type="Rhea" id="RHEA-COMP:9702"/>
        <dbReference type="ChEBI" id="CHEBI:30616"/>
        <dbReference type="ChEBI" id="CHEBI:33019"/>
        <dbReference type="ChEBI" id="CHEBI:60039"/>
        <dbReference type="ChEBI" id="CHEBI:78442"/>
        <dbReference type="ChEBI" id="CHEBI:78532"/>
        <dbReference type="ChEBI" id="CHEBI:456215"/>
        <dbReference type="EC" id="6.1.1.15"/>
    </reaction>
</comment>
<comment type="subunit">
    <text evidence="1">Homodimer.</text>
</comment>
<comment type="subcellular location">
    <subcellularLocation>
        <location evidence="1">Cytoplasm</location>
    </subcellularLocation>
</comment>
<comment type="domain">
    <text evidence="1">Consists of three domains: the N-terminal catalytic domain, the editing domain and the C-terminal anticodon-binding domain.</text>
</comment>
<comment type="similarity">
    <text evidence="1">Belongs to the class-II aminoacyl-tRNA synthetase family. ProS type 1 subfamily.</text>
</comment>
<evidence type="ECO:0000255" key="1">
    <source>
        <dbReference type="HAMAP-Rule" id="MF_01569"/>
    </source>
</evidence>
<organism>
    <name type="scientific">Elusimicrobium minutum (strain Pei191)</name>
    <dbReference type="NCBI Taxonomy" id="445932"/>
    <lineage>
        <taxon>Bacteria</taxon>
        <taxon>Pseudomonadati</taxon>
        <taxon>Elusimicrobiota</taxon>
        <taxon>Elusimicrobia</taxon>
        <taxon>Elusimicrobiales</taxon>
        <taxon>Elusimicrobiaceae</taxon>
        <taxon>Elusimicrobium</taxon>
    </lineage>
</organism>
<protein>
    <recommendedName>
        <fullName evidence="1">Proline--tRNA ligase</fullName>
        <ecNumber evidence="1">6.1.1.15</ecNumber>
    </recommendedName>
    <alternativeName>
        <fullName evidence="1">Prolyl-tRNA synthetase</fullName>
        <shortName evidence="1">ProRS</shortName>
    </alternativeName>
</protein>
<gene>
    <name evidence="1" type="primary">proS</name>
    <name type="ordered locus">Emin_0684</name>
</gene>
<feature type="chain" id="PRO_1000199375" description="Proline--tRNA ligase">
    <location>
        <begin position="1"/>
        <end position="573"/>
    </location>
</feature>